<accession>B0JSE2</accession>
<sequence length="156" mass="17518">MSRRKNVKKRPIPPDPVYNSCLVSMTIRRIMRSGKKSLAANIVYDALKTVGERTGQEPLEVFEKAVKNATPLVEVKARRVGGATYQVPMEVRSNRGSTLALRWLVHYARTRGGKTMAGKLANEIMDAANETGGTIKKREETHRMAEANKAFAHYRY</sequence>
<feature type="chain" id="PRO_1000081288" description="Small ribosomal subunit protein uS7">
    <location>
        <begin position="1"/>
        <end position="156"/>
    </location>
</feature>
<gene>
    <name evidence="1" type="primary">rpsG</name>
    <name evidence="1" type="synonym">rps7</name>
    <name type="ordered locus">MAE_42780</name>
</gene>
<reference key="1">
    <citation type="journal article" date="2007" name="DNA Res.">
        <title>Complete genomic structure of the bloom-forming toxic cyanobacterium Microcystis aeruginosa NIES-843.</title>
        <authorList>
            <person name="Kaneko T."/>
            <person name="Nakajima N."/>
            <person name="Okamoto S."/>
            <person name="Suzuki I."/>
            <person name="Tanabe Y."/>
            <person name="Tamaoki M."/>
            <person name="Nakamura Y."/>
            <person name="Kasai F."/>
            <person name="Watanabe A."/>
            <person name="Kawashima K."/>
            <person name="Kishida Y."/>
            <person name="Ono A."/>
            <person name="Shimizu Y."/>
            <person name="Takahashi C."/>
            <person name="Minami C."/>
            <person name="Fujishiro T."/>
            <person name="Kohara M."/>
            <person name="Katoh M."/>
            <person name="Nakazaki N."/>
            <person name="Nakayama S."/>
            <person name="Yamada M."/>
            <person name="Tabata S."/>
            <person name="Watanabe M.M."/>
        </authorList>
    </citation>
    <scope>NUCLEOTIDE SEQUENCE [LARGE SCALE GENOMIC DNA]</scope>
    <source>
        <strain>NIES-843 / IAM M-247</strain>
    </source>
</reference>
<proteinExistence type="inferred from homology"/>
<protein>
    <recommendedName>
        <fullName evidence="1">Small ribosomal subunit protein uS7</fullName>
    </recommendedName>
    <alternativeName>
        <fullName evidence="2">30S ribosomal protein S7</fullName>
    </alternativeName>
</protein>
<comment type="function">
    <text evidence="1">One of the primary rRNA binding proteins, it binds directly to 16S rRNA where it nucleates assembly of the head domain of the 30S subunit. Is located at the subunit interface close to the decoding center, probably blocks exit of the E-site tRNA.</text>
</comment>
<comment type="subunit">
    <text evidence="1">Part of the 30S ribosomal subunit. Contacts proteins S9 and S11.</text>
</comment>
<comment type="similarity">
    <text evidence="1">Belongs to the universal ribosomal protein uS7 family.</text>
</comment>
<keyword id="KW-0687">Ribonucleoprotein</keyword>
<keyword id="KW-0689">Ribosomal protein</keyword>
<keyword id="KW-0694">RNA-binding</keyword>
<keyword id="KW-0699">rRNA-binding</keyword>
<keyword id="KW-0820">tRNA-binding</keyword>
<evidence type="ECO:0000255" key="1">
    <source>
        <dbReference type="HAMAP-Rule" id="MF_00480"/>
    </source>
</evidence>
<evidence type="ECO:0000305" key="2"/>
<dbReference type="EMBL" id="AP009552">
    <property type="protein sequence ID" value="BAG04100.1"/>
    <property type="molecule type" value="Genomic_DNA"/>
</dbReference>
<dbReference type="RefSeq" id="WP_002758831.1">
    <property type="nucleotide sequence ID" value="NC_010296.1"/>
</dbReference>
<dbReference type="SMR" id="B0JSE2"/>
<dbReference type="STRING" id="449447.MAE_42780"/>
<dbReference type="PaxDb" id="449447-MAE_42780"/>
<dbReference type="EnsemblBacteria" id="BAG04100">
    <property type="protein sequence ID" value="BAG04100"/>
    <property type="gene ID" value="MAE_42780"/>
</dbReference>
<dbReference type="KEGG" id="mar:MAE_42780"/>
<dbReference type="eggNOG" id="COG0049">
    <property type="taxonomic scope" value="Bacteria"/>
</dbReference>
<dbReference type="HOGENOM" id="CLU_072226_1_1_3"/>
<dbReference type="BioCyc" id="MAER449447:MAE_RS18565-MONOMER"/>
<dbReference type="Proteomes" id="UP000001510">
    <property type="component" value="Chromosome"/>
</dbReference>
<dbReference type="GO" id="GO:0015935">
    <property type="term" value="C:small ribosomal subunit"/>
    <property type="evidence" value="ECO:0007669"/>
    <property type="project" value="InterPro"/>
</dbReference>
<dbReference type="GO" id="GO:0019843">
    <property type="term" value="F:rRNA binding"/>
    <property type="evidence" value="ECO:0007669"/>
    <property type="project" value="UniProtKB-UniRule"/>
</dbReference>
<dbReference type="GO" id="GO:0003735">
    <property type="term" value="F:structural constituent of ribosome"/>
    <property type="evidence" value="ECO:0007669"/>
    <property type="project" value="InterPro"/>
</dbReference>
<dbReference type="GO" id="GO:0000049">
    <property type="term" value="F:tRNA binding"/>
    <property type="evidence" value="ECO:0007669"/>
    <property type="project" value="UniProtKB-UniRule"/>
</dbReference>
<dbReference type="GO" id="GO:0006412">
    <property type="term" value="P:translation"/>
    <property type="evidence" value="ECO:0007669"/>
    <property type="project" value="UniProtKB-UniRule"/>
</dbReference>
<dbReference type="CDD" id="cd14871">
    <property type="entry name" value="uS7_Chloroplast"/>
    <property type="match status" value="1"/>
</dbReference>
<dbReference type="FunFam" id="1.10.455.10:FF:000001">
    <property type="entry name" value="30S ribosomal protein S7"/>
    <property type="match status" value="1"/>
</dbReference>
<dbReference type="Gene3D" id="1.10.455.10">
    <property type="entry name" value="Ribosomal protein S7 domain"/>
    <property type="match status" value="1"/>
</dbReference>
<dbReference type="HAMAP" id="MF_00480_B">
    <property type="entry name" value="Ribosomal_uS7_B"/>
    <property type="match status" value="1"/>
</dbReference>
<dbReference type="InterPro" id="IPR000235">
    <property type="entry name" value="Ribosomal_uS7"/>
</dbReference>
<dbReference type="InterPro" id="IPR005717">
    <property type="entry name" value="Ribosomal_uS7_bac/org-type"/>
</dbReference>
<dbReference type="InterPro" id="IPR020606">
    <property type="entry name" value="Ribosomal_uS7_CS"/>
</dbReference>
<dbReference type="InterPro" id="IPR023798">
    <property type="entry name" value="Ribosomal_uS7_dom"/>
</dbReference>
<dbReference type="InterPro" id="IPR036823">
    <property type="entry name" value="Ribosomal_uS7_dom_sf"/>
</dbReference>
<dbReference type="NCBIfam" id="TIGR01029">
    <property type="entry name" value="rpsG_bact"/>
    <property type="match status" value="1"/>
</dbReference>
<dbReference type="PANTHER" id="PTHR11205">
    <property type="entry name" value="RIBOSOMAL PROTEIN S7"/>
    <property type="match status" value="1"/>
</dbReference>
<dbReference type="Pfam" id="PF00177">
    <property type="entry name" value="Ribosomal_S7"/>
    <property type="match status" value="1"/>
</dbReference>
<dbReference type="PIRSF" id="PIRSF002122">
    <property type="entry name" value="RPS7p_RPS7a_RPS5e_RPS7o"/>
    <property type="match status" value="1"/>
</dbReference>
<dbReference type="SUPFAM" id="SSF47973">
    <property type="entry name" value="Ribosomal protein S7"/>
    <property type="match status" value="1"/>
</dbReference>
<dbReference type="PROSITE" id="PS00052">
    <property type="entry name" value="RIBOSOMAL_S7"/>
    <property type="match status" value="1"/>
</dbReference>
<organism>
    <name type="scientific">Microcystis aeruginosa (strain NIES-843 / IAM M-2473)</name>
    <dbReference type="NCBI Taxonomy" id="449447"/>
    <lineage>
        <taxon>Bacteria</taxon>
        <taxon>Bacillati</taxon>
        <taxon>Cyanobacteriota</taxon>
        <taxon>Cyanophyceae</taxon>
        <taxon>Oscillatoriophycideae</taxon>
        <taxon>Chroococcales</taxon>
        <taxon>Microcystaceae</taxon>
        <taxon>Microcystis</taxon>
    </lineage>
</organism>
<name>RS7_MICAN</name>